<dbReference type="EC" id="3.2.1.4"/>
<dbReference type="EMBL" id="AB004098">
    <property type="protein sequence ID" value="BAA24918.1"/>
    <property type="molecule type" value="Genomic_DNA"/>
</dbReference>
<dbReference type="PIR" id="JC5874">
    <property type="entry name" value="JC5874"/>
</dbReference>
<dbReference type="SMR" id="P28622"/>
<dbReference type="CAZy" id="CBM3">
    <property type="family name" value="Carbohydrate-Binding Module Family 3"/>
</dbReference>
<dbReference type="CAZy" id="GH9">
    <property type="family name" value="Glycoside Hydrolase Family 9"/>
</dbReference>
<dbReference type="GO" id="GO:0005576">
    <property type="term" value="C:extracellular region"/>
    <property type="evidence" value="ECO:0007669"/>
    <property type="project" value="UniProtKB-SubCell"/>
</dbReference>
<dbReference type="GO" id="GO:0008810">
    <property type="term" value="F:cellulase activity"/>
    <property type="evidence" value="ECO:0007669"/>
    <property type="project" value="UniProtKB-EC"/>
</dbReference>
<dbReference type="GO" id="GO:0030248">
    <property type="term" value="F:cellulose binding"/>
    <property type="evidence" value="ECO:0007669"/>
    <property type="project" value="InterPro"/>
</dbReference>
<dbReference type="GO" id="GO:0030245">
    <property type="term" value="P:cellulose catabolic process"/>
    <property type="evidence" value="ECO:0007669"/>
    <property type="project" value="UniProtKB-KW"/>
</dbReference>
<dbReference type="FunFam" id="1.50.10.10:FF:000020">
    <property type="entry name" value="Endoglucanase"/>
    <property type="match status" value="1"/>
</dbReference>
<dbReference type="Gene3D" id="1.50.10.10">
    <property type="match status" value="1"/>
</dbReference>
<dbReference type="Gene3D" id="2.60.40.710">
    <property type="entry name" value="Endoglucanase-like"/>
    <property type="match status" value="1"/>
</dbReference>
<dbReference type="InterPro" id="IPR008928">
    <property type="entry name" value="6-hairpin_glycosidase_sf"/>
</dbReference>
<dbReference type="InterPro" id="IPR012341">
    <property type="entry name" value="6hp_glycosidase-like_sf"/>
</dbReference>
<dbReference type="InterPro" id="IPR008965">
    <property type="entry name" value="CBM2/CBM3_carb-bd_dom_sf"/>
</dbReference>
<dbReference type="InterPro" id="IPR001956">
    <property type="entry name" value="CBM3"/>
</dbReference>
<dbReference type="InterPro" id="IPR036966">
    <property type="entry name" value="CBM3_sf"/>
</dbReference>
<dbReference type="InterPro" id="IPR001701">
    <property type="entry name" value="Glyco_hydro_9"/>
</dbReference>
<dbReference type="InterPro" id="IPR033126">
    <property type="entry name" value="Glyco_hydro_9_Asp/Glu_AS"/>
</dbReference>
<dbReference type="InterPro" id="IPR018221">
    <property type="entry name" value="Glyco_hydro_9_His_AS"/>
</dbReference>
<dbReference type="PANTHER" id="PTHR22298">
    <property type="entry name" value="ENDO-1,4-BETA-GLUCANASE"/>
    <property type="match status" value="1"/>
</dbReference>
<dbReference type="Pfam" id="PF00942">
    <property type="entry name" value="CBM_3"/>
    <property type="match status" value="1"/>
</dbReference>
<dbReference type="Pfam" id="PF00759">
    <property type="entry name" value="Glyco_hydro_9"/>
    <property type="match status" value="1"/>
</dbReference>
<dbReference type="SMART" id="SM01067">
    <property type="entry name" value="CBM_3"/>
    <property type="match status" value="1"/>
</dbReference>
<dbReference type="SUPFAM" id="SSF49384">
    <property type="entry name" value="Carbohydrate-binding domain"/>
    <property type="match status" value="1"/>
</dbReference>
<dbReference type="SUPFAM" id="SSF48208">
    <property type="entry name" value="Six-hairpin glycosidases"/>
    <property type="match status" value="1"/>
</dbReference>
<dbReference type="PROSITE" id="PS51172">
    <property type="entry name" value="CBM3"/>
    <property type="match status" value="1"/>
</dbReference>
<dbReference type="PROSITE" id="PS60032">
    <property type="entry name" value="GH9_1"/>
    <property type="match status" value="1"/>
</dbReference>
<dbReference type="PROSITE" id="PS00592">
    <property type="entry name" value="GH9_2"/>
    <property type="match status" value="1"/>
</dbReference>
<dbReference type="PROSITE" id="PS00698">
    <property type="entry name" value="GH9_3"/>
    <property type="match status" value="1"/>
</dbReference>
<accession>P28622</accession>
<accession>O50589</accession>
<feature type="signal peptide" evidence="1">
    <location>
        <begin position="1"/>
        <end position="25"/>
    </location>
</feature>
<feature type="chain" id="PRO_0000007952" description="Endoglucanase 4">
    <location>
        <begin position="26"/>
        <end position="636"/>
    </location>
</feature>
<feature type="domain" description="CBM3" evidence="2">
    <location>
        <begin position="478"/>
        <end position="635"/>
    </location>
</feature>
<feature type="active site" description="Nucleophile" evidence="5">
    <location>
        <position position="82"/>
    </location>
</feature>
<feature type="active site" evidence="3">
    <location>
        <position position="400"/>
    </location>
</feature>
<feature type="active site" evidence="4">
    <location>
        <position position="438"/>
    </location>
</feature>
<feature type="active site" evidence="4">
    <location>
        <position position="447"/>
    </location>
</feature>
<feature type="sequence conflict" description="In Ref. 2." evidence="6" ref="2">
    <original>AKGFT</original>
    <variation>CEGIH</variation>
    <location>
        <begin position="530"/>
        <end position="534"/>
    </location>
</feature>
<organism>
    <name type="scientific">Bacillus sp. (strain KSM-522)</name>
    <dbReference type="NCBI Taxonomy" id="120046"/>
    <lineage>
        <taxon>Bacteria</taxon>
        <taxon>Bacillati</taxon>
        <taxon>Bacillota</taxon>
        <taxon>Bacilli</taxon>
        <taxon>Bacillales</taxon>
        <taxon>Bacillaceae</taxon>
        <taxon>Bacillus</taxon>
    </lineage>
</organism>
<name>GUN4_BACS5</name>
<proteinExistence type="inferred from homology"/>
<protein>
    <recommendedName>
        <fullName>Endoglucanase 4</fullName>
        <ecNumber>3.2.1.4</ecNumber>
    </recommendedName>
    <alternativeName>
        <fullName>Cellulase 4</fullName>
    </alternativeName>
    <alternativeName>
        <fullName>EG-IV</fullName>
    </alternativeName>
    <alternativeName>
        <fullName>Endo-1,4-beta-glucanase 4</fullName>
    </alternativeName>
</protein>
<keyword id="KW-0119">Carbohydrate metabolism</keyword>
<keyword id="KW-0136">Cellulose degradation</keyword>
<keyword id="KW-0326">Glycosidase</keyword>
<keyword id="KW-0378">Hydrolase</keyword>
<keyword id="KW-0624">Polysaccharide degradation</keyword>
<keyword id="KW-0964">Secreted</keyword>
<keyword id="KW-0732">Signal</keyword>
<evidence type="ECO:0000255" key="1"/>
<evidence type="ECO:0000255" key="2">
    <source>
        <dbReference type="PROSITE-ProRule" id="PRU00513"/>
    </source>
</evidence>
<evidence type="ECO:0000255" key="3">
    <source>
        <dbReference type="PROSITE-ProRule" id="PRU10059"/>
    </source>
</evidence>
<evidence type="ECO:0000255" key="4">
    <source>
        <dbReference type="PROSITE-ProRule" id="PRU10060"/>
    </source>
</evidence>
<evidence type="ECO:0000255" key="5">
    <source>
        <dbReference type="PROSITE-ProRule" id="PRU10140"/>
    </source>
</evidence>
<evidence type="ECO:0000305" key="6"/>
<evidence type="ECO:0000305" key="7">
    <source>
    </source>
</evidence>
<reference key="1">
    <citation type="journal article" date="1997" name="Biosci. Biotechnol. Biochem.">
        <title>Amino acid sequence and stereoselective hydrolytic reaction of an endo-1,4-beta-glucanase from a Bacillus strain.</title>
        <authorList>
            <person name="Hitomi J."/>
            <person name="Hatada Y."/>
            <person name="Kawaminami S."/>
            <person name="Kawai S."/>
            <person name="Ito S."/>
        </authorList>
    </citation>
    <scope>NUCLEOTIDE SEQUENCE [GENOMIC DNA]</scope>
</reference>
<reference key="2">
    <citation type="journal article" date="1990" name="Biochem. Biophys. Res. Commun.">
        <title>Cloning of Clostridium cellulovorans endo-1,4-beta-glucanase genes.</title>
        <authorList>
            <person name="Shoseyov O."/>
            <person name="Foong F."/>
            <person name="Hamamoto T."/>
            <person name="Doi R.H."/>
        </authorList>
    </citation>
    <scope>PRELIMINARY NUCLEOTIDE SEQUENCE [GENOMIC DNA] OF 1-534</scope>
</reference>
<reference key="3">
    <citation type="unpublished observations" date="2000-01">
        <authorList>
            <person name="Doi R.H."/>
        </authorList>
    </citation>
    <scope>SHOWS THAT SEQUENCE DID NOT ORIGINATE FROM C.CELLULOVORANS</scope>
</reference>
<comment type="catalytic activity">
    <reaction>
        <text>Endohydrolysis of (1-&gt;4)-beta-D-glucosidic linkages in cellulose, lichenin and cereal beta-D-glucans.</text>
        <dbReference type="EC" id="3.2.1.4"/>
    </reaction>
</comment>
<comment type="subcellular location">
    <subcellularLocation>
        <location>Secreted</location>
    </subcellularLocation>
</comment>
<comment type="similarity">
    <text evidence="5 6">Belongs to the glycosyl hydrolase 9 (cellulase E) family.</text>
</comment>
<comment type="caution">
    <text evidence="7">Was originally thought to originate from Clostridium cellulovorans and was termed endoglucanase C (engC).</text>
</comment>
<sequence>MTRRWSFLVQCFTFKKKEGVRSRYMSDYNYVEVLQKSILFYEAQRSGKLPESNRLNWRGDSGLEDGKDVGHDLTGGWYDAGDHVKFGLPMAYSAAVLAWTVYEYREAYEEAELLDDMLDQIKWATDYFLKAHTGPNEFWAQVGDGNADHGWWGPAEVMPMNRPAFKIDEHCPGTEVAAQTAAALAAGSIIFKETDAPYAAKLLTHAKQLYAFADQYRGEYTDCVTNAQPFYNSWSGYIDELIWGGIWLYLATNDQTYLNKALKAVEEWPKDWDYTFTMSWDNTFFLSQILLARITKEKRFIESTERNLDYWSTGFVQNGKVERITYTPGGLAWLDQWGSLRYTANAAFLAFVYADWVSDQEKKNRYQTFAIRQTHYMLGDNPQNRSYVVGFGKNPPMHPHHRTAHGSWSNQLTTPSSHRHTLYGPLVGGPNRQDQYTDDISDYVSNEVATDYNAAFTGNGAAVWSGQSKLPNFPPKEKVEDEFFVEAAVMSNDTTSTQIKAILYNRSGWPARSSQSLSFRYYVNLSEIFAKGFTDKDIQVTAVYNEGASLSPLTVYDASSHIYFTEIDFTGVAIFPGGESLHKKEIQFRLSAPNGANIWDASNDYSFQGLTSNMQKTARIPVFDQGDLVFGTLPNK</sequence>